<gene>
    <name evidence="1" type="primary">metAA</name>
    <name type="ordered locus">RSKD131_1318</name>
</gene>
<comment type="function">
    <text evidence="1">Transfers an acetyl group from acetyl-CoA to L-homoserine, forming acetyl-L-homoserine.</text>
</comment>
<comment type="catalytic activity">
    <reaction evidence="1">
        <text>L-homoserine + acetyl-CoA = O-acetyl-L-homoserine + CoA</text>
        <dbReference type="Rhea" id="RHEA:13701"/>
        <dbReference type="ChEBI" id="CHEBI:57287"/>
        <dbReference type="ChEBI" id="CHEBI:57288"/>
        <dbReference type="ChEBI" id="CHEBI:57476"/>
        <dbReference type="ChEBI" id="CHEBI:57716"/>
        <dbReference type="EC" id="2.3.1.31"/>
    </reaction>
</comment>
<comment type="pathway">
    <text evidence="1">Amino-acid biosynthesis; L-methionine biosynthesis via de novo pathway; O-acetyl-L-homoserine from L-homoserine: step 1/1.</text>
</comment>
<comment type="subcellular location">
    <subcellularLocation>
        <location evidence="1">Cytoplasm</location>
    </subcellularLocation>
</comment>
<comment type="similarity">
    <text evidence="1">Belongs to the MetA family.</text>
</comment>
<accession>B9KT32</accession>
<name>METAA_CERSK</name>
<feature type="chain" id="PRO_1000191188" description="Homoserine O-acetyltransferase">
    <location>
        <begin position="1"/>
        <end position="305"/>
    </location>
</feature>
<feature type="active site" description="Acyl-thioester intermediate" evidence="1">
    <location>
        <position position="142"/>
    </location>
</feature>
<feature type="active site" description="Proton acceptor" evidence="1">
    <location>
        <position position="235"/>
    </location>
</feature>
<feature type="active site" evidence="1">
    <location>
        <position position="237"/>
    </location>
</feature>
<feature type="binding site" evidence="1">
    <location>
        <position position="163"/>
    </location>
    <ligand>
        <name>substrate</name>
    </ligand>
</feature>
<feature type="binding site" evidence="1">
    <location>
        <position position="192"/>
    </location>
    <ligand>
        <name>substrate</name>
    </ligand>
</feature>
<feature type="binding site" evidence="1">
    <location>
        <position position="249"/>
    </location>
    <ligand>
        <name>substrate</name>
    </ligand>
</feature>
<feature type="site" description="Important for acyl-CoA specificity" evidence="1">
    <location>
        <position position="111"/>
    </location>
</feature>
<feature type="site" description="Important for substrate specificity" evidence="1">
    <location>
        <position position="192"/>
    </location>
</feature>
<keyword id="KW-0012">Acyltransferase</keyword>
<keyword id="KW-0028">Amino-acid biosynthesis</keyword>
<keyword id="KW-0963">Cytoplasm</keyword>
<keyword id="KW-0486">Methionine biosynthesis</keyword>
<keyword id="KW-0808">Transferase</keyword>
<reference key="1">
    <citation type="journal article" date="2009" name="J. Bacteriol.">
        <title>Complete genome sequence of Rhodobacter sphaeroides KD131.</title>
        <authorList>
            <person name="Lim S.-K."/>
            <person name="Kim S.J."/>
            <person name="Cha S.H."/>
            <person name="Oh Y.-K."/>
            <person name="Rhee H.-J."/>
            <person name="Kim M.-S."/>
            <person name="Lee J.K."/>
        </authorList>
    </citation>
    <scope>NUCLEOTIDE SEQUENCE [LARGE SCALE GENOMIC DNA]</scope>
    <source>
        <strain>KD131 / KCTC 12085</strain>
    </source>
</reference>
<organism>
    <name type="scientific">Cereibacter sphaeroides (strain KD131 / KCTC 12085)</name>
    <name type="common">Rhodobacter sphaeroides</name>
    <dbReference type="NCBI Taxonomy" id="557760"/>
    <lineage>
        <taxon>Bacteria</taxon>
        <taxon>Pseudomonadati</taxon>
        <taxon>Pseudomonadota</taxon>
        <taxon>Alphaproteobacteria</taxon>
        <taxon>Rhodobacterales</taxon>
        <taxon>Paracoccaceae</taxon>
        <taxon>Cereibacter</taxon>
    </lineage>
</organism>
<evidence type="ECO:0000255" key="1">
    <source>
        <dbReference type="HAMAP-Rule" id="MF_00295"/>
    </source>
</evidence>
<dbReference type="EC" id="2.3.1.31" evidence="1"/>
<dbReference type="EMBL" id="CP001150">
    <property type="protein sequence ID" value="ACM01178.1"/>
    <property type="molecule type" value="Genomic_DNA"/>
</dbReference>
<dbReference type="SMR" id="B9KT32"/>
<dbReference type="GeneID" id="67446737"/>
<dbReference type="KEGG" id="rsk:RSKD131_1318"/>
<dbReference type="HOGENOM" id="CLU_057851_0_1_5"/>
<dbReference type="UniPathway" id="UPA00051">
    <property type="reaction ID" value="UER00074"/>
</dbReference>
<dbReference type="GO" id="GO:0005737">
    <property type="term" value="C:cytoplasm"/>
    <property type="evidence" value="ECO:0007669"/>
    <property type="project" value="UniProtKB-SubCell"/>
</dbReference>
<dbReference type="GO" id="GO:0004414">
    <property type="term" value="F:homoserine O-acetyltransferase activity"/>
    <property type="evidence" value="ECO:0007669"/>
    <property type="project" value="UniProtKB-EC"/>
</dbReference>
<dbReference type="GO" id="GO:0008899">
    <property type="term" value="F:homoserine O-succinyltransferase activity"/>
    <property type="evidence" value="ECO:0007669"/>
    <property type="project" value="UniProtKB-UniRule"/>
</dbReference>
<dbReference type="GO" id="GO:0019281">
    <property type="term" value="P:L-methionine biosynthetic process from homoserine via O-succinyl-L-homoserine and cystathionine"/>
    <property type="evidence" value="ECO:0007669"/>
    <property type="project" value="InterPro"/>
</dbReference>
<dbReference type="CDD" id="cd03131">
    <property type="entry name" value="GATase1_HTS"/>
    <property type="match status" value="1"/>
</dbReference>
<dbReference type="Gene3D" id="3.40.50.880">
    <property type="match status" value="1"/>
</dbReference>
<dbReference type="HAMAP" id="MF_00295">
    <property type="entry name" value="MetA_acyltransf"/>
    <property type="match status" value="1"/>
</dbReference>
<dbReference type="InterPro" id="IPR029062">
    <property type="entry name" value="Class_I_gatase-like"/>
</dbReference>
<dbReference type="InterPro" id="IPR005697">
    <property type="entry name" value="HST_MetA"/>
</dbReference>
<dbReference type="InterPro" id="IPR033752">
    <property type="entry name" value="MetA_family"/>
</dbReference>
<dbReference type="NCBIfam" id="TIGR01001">
    <property type="entry name" value="metA"/>
    <property type="match status" value="1"/>
</dbReference>
<dbReference type="PANTHER" id="PTHR20919">
    <property type="entry name" value="HOMOSERINE O-SUCCINYLTRANSFERASE"/>
    <property type="match status" value="1"/>
</dbReference>
<dbReference type="PANTHER" id="PTHR20919:SF0">
    <property type="entry name" value="HOMOSERINE O-SUCCINYLTRANSFERASE"/>
    <property type="match status" value="1"/>
</dbReference>
<dbReference type="Pfam" id="PF04204">
    <property type="entry name" value="HTS"/>
    <property type="match status" value="1"/>
</dbReference>
<dbReference type="PIRSF" id="PIRSF000450">
    <property type="entry name" value="H_ser_succinyltr"/>
    <property type="match status" value="1"/>
</dbReference>
<dbReference type="SUPFAM" id="SSF52317">
    <property type="entry name" value="Class I glutamine amidotransferase-like"/>
    <property type="match status" value="1"/>
</dbReference>
<protein>
    <recommendedName>
        <fullName evidence="1">Homoserine O-acetyltransferase</fullName>
        <shortName evidence="1">HAT</shortName>
        <ecNumber evidence="1">2.3.1.31</ecNumber>
    </recommendedName>
    <alternativeName>
        <fullName evidence="1">Homoserine transacetylase</fullName>
        <shortName evidence="1">HTA</shortName>
    </alternativeName>
</protein>
<sequence length="305" mass="35171">MPITLPATLPAFDVLTHEGVMVMTPERAARQDIRPLRIGLLNLMPKKIQTENQFARLIGATPLQIDFQLIRMTEHQTKNTAAEHMEAFYRPFQEVKHEKFDGLIITGAPIEHLDFADVTYWDELCEVMDWTQTNVQSTFGVCWGGMAMIYHFHRVQKHRLQAKAFGCFRHRNVAPTSPYLRGFSDDFVIPVSRWTEMRQAEIDAAPGLRTLLASDEAGPCLVEDPGHRALYIFNHFEYDSDTLKQEYDRDVANGKPINVPANYYPDDDPSKPPLNRWRSHAHLLYGNWINEIYQSTPYDPQQIGR</sequence>
<proteinExistence type="inferred from homology"/>